<dbReference type="EMBL" id="CM000136">
    <property type="protein sequence ID" value="EEC68439.1"/>
    <property type="molecule type" value="Genomic_DNA"/>
</dbReference>
<dbReference type="SMR" id="B8BLA3"/>
<dbReference type="STRING" id="39946.B8BLA3"/>
<dbReference type="EnsemblPlants" id="BGIOSGA033734-TA">
    <property type="protein sequence ID" value="BGIOSGA033734-PA"/>
    <property type="gene ID" value="BGIOSGA033734"/>
</dbReference>
<dbReference type="EnsemblPlants" id="OsGoSa_11g0019530.01">
    <property type="protein sequence ID" value="OsGoSa_11g0019530.01"/>
    <property type="gene ID" value="OsGoSa_11g0019530"/>
</dbReference>
<dbReference type="EnsemblPlants" id="OsIR64_11g0020070.01">
    <property type="protein sequence ID" value="OsIR64_11g0020070.01"/>
    <property type="gene ID" value="OsIR64_11g0020070"/>
</dbReference>
<dbReference type="EnsemblPlants" id="OsKYG_11g0020070.01">
    <property type="protein sequence ID" value="OsKYG_11g0020070.01"/>
    <property type="gene ID" value="OsKYG_11g0020070"/>
</dbReference>
<dbReference type="EnsemblPlants" id="OsLaMu_11g0019350.01">
    <property type="protein sequence ID" value="OsLaMu_11g0019350.01"/>
    <property type="gene ID" value="OsLaMu_11g0019350"/>
</dbReference>
<dbReference type="EnsemblPlants" id="OsLima_11g0019870.01">
    <property type="protein sequence ID" value="OsLima_11g0019870.01"/>
    <property type="gene ID" value="OsLima_11g0019870"/>
</dbReference>
<dbReference type="EnsemblPlants" id="OsLiXu_11g0019270.01">
    <property type="protein sequence ID" value="OsLiXu_11g0019270.01"/>
    <property type="gene ID" value="OsLiXu_11g0019270"/>
</dbReference>
<dbReference type="EnsemblPlants" id="OsMH63_11G020450_01">
    <property type="protein sequence ID" value="OsMH63_11G020450_01"/>
    <property type="gene ID" value="OsMH63_11G020450"/>
</dbReference>
<dbReference type="EnsemblPlants" id="OsPr106_11g0019610.01">
    <property type="protein sequence ID" value="OsPr106_11g0019610.01"/>
    <property type="gene ID" value="OsPr106_11g0019610"/>
</dbReference>
<dbReference type="EnsemblPlants" id="OsZS97_11G019550_01">
    <property type="protein sequence ID" value="OsZS97_11G019550_01"/>
    <property type="gene ID" value="OsZS97_11G019550"/>
</dbReference>
<dbReference type="Gramene" id="BGIOSGA033734-TA">
    <property type="protein sequence ID" value="BGIOSGA033734-PA"/>
    <property type="gene ID" value="BGIOSGA033734"/>
</dbReference>
<dbReference type="Gramene" id="OsGoSa_11g0019530.01">
    <property type="protein sequence ID" value="OsGoSa_11g0019530.01"/>
    <property type="gene ID" value="OsGoSa_11g0019530"/>
</dbReference>
<dbReference type="Gramene" id="OsIR64_11g0020070.01">
    <property type="protein sequence ID" value="OsIR64_11g0020070.01"/>
    <property type="gene ID" value="OsIR64_11g0020070"/>
</dbReference>
<dbReference type="Gramene" id="OsKYG_11g0020070.01">
    <property type="protein sequence ID" value="OsKYG_11g0020070.01"/>
    <property type="gene ID" value="OsKYG_11g0020070"/>
</dbReference>
<dbReference type="Gramene" id="OsLaMu_11g0019350.01">
    <property type="protein sequence ID" value="OsLaMu_11g0019350.01"/>
    <property type="gene ID" value="OsLaMu_11g0019350"/>
</dbReference>
<dbReference type="Gramene" id="OsLima_11g0019870.01">
    <property type="protein sequence ID" value="OsLima_11g0019870.01"/>
    <property type="gene ID" value="OsLima_11g0019870"/>
</dbReference>
<dbReference type="Gramene" id="OsLiXu_11g0019270.01">
    <property type="protein sequence ID" value="OsLiXu_11g0019270.01"/>
    <property type="gene ID" value="OsLiXu_11g0019270"/>
</dbReference>
<dbReference type="Gramene" id="OsMH63_11G020450_01">
    <property type="protein sequence ID" value="OsMH63_11G020450_01"/>
    <property type="gene ID" value="OsMH63_11G020450"/>
</dbReference>
<dbReference type="Gramene" id="OsPr106_11g0019610.01">
    <property type="protein sequence ID" value="OsPr106_11g0019610.01"/>
    <property type="gene ID" value="OsPr106_11g0019610"/>
</dbReference>
<dbReference type="Gramene" id="OsZS97_11G019550_01">
    <property type="protein sequence ID" value="OsZS97_11G019550_01"/>
    <property type="gene ID" value="OsZS97_11G019550"/>
</dbReference>
<dbReference type="HOGENOM" id="CLU_183267_0_0_1"/>
<dbReference type="OMA" id="ATHITTY"/>
<dbReference type="OrthoDB" id="673935at2759"/>
<dbReference type="Proteomes" id="UP000007015">
    <property type="component" value="Chromosome 11"/>
</dbReference>
<dbReference type="GO" id="GO:0046983">
    <property type="term" value="F:protein dimerization activity"/>
    <property type="evidence" value="ECO:0007669"/>
    <property type="project" value="InterPro"/>
</dbReference>
<dbReference type="GO" id="GO:0006355">
    <property type="term" value="P:regulation of DNA-templated transcription"/>
    <property type="evidence" value="ECO:0007669"/>
    <property type="project" value="InterPro"/>
</dbReference>
<dbReference type="GO" id="GO:0040008">
    <property type="term" value="P:regulation of growth"/>
    <property type="evidence" value="ECO:0007669"/>
    <property type="project" value="InterPro"/>
</dbReference>
<dbReference type="Gene3D" id="4.10.280.10">
    <property type="entry name" value="Helix-loop-helix DNA-binding domain"/>
    <property type="match status" value="1"/>
</dbReference>
<dbReference type="InterPro" id="IPR036638">
    <property type="entry name" value="HLH_DNA-bd_sf"/>
</dbReference>
<dbReference type="InterPro" id="IPR044172">
    <property type="entry name" value="ILI2-like"/>
</dbReference>
<dbReference type="InterPro" id="IPR044293">
    <property type="entry name" value="PRE"/>
</dbReference>
<dbReference type="PANTHER" id="PTHR38546">
    <property type="entry name" value="DNA BINDING PROTEIN"/>
    <property type="match status" value="1"/>
</dbReference>
<dbReference type="PANTHER" id="PTHR38546:SF5">
    <property type="entry name" value="TRANSCRIPTION FACTOR ILI2"/>
    <property type="match status" value="1"/>
</dbReference>
<dbReference type="Pfam" id="PF23174">
    <property type="entry name" value="bHLH_ILI"/>
    <property type="match status" value="1"/>
</dbReference>
<dbReference type="SUPFAM" id="SSF47459">
    <property type="entry name" value="HLH, helix-loop-helix DNA-binding domain"/>
    <property type="match status" value="1"/>
</dbReference>
<comment type="function">
    <text evidence="1">Atypical and probable non DNA-binding bHLH transcription factor that integrates multiple signaling pathways to regulate cell elongation and plant development.</text>
</comment>
<comment type="similarity">
    <text>Belongs to the bHLH protein family.</text>
</comment>
<name>ILI2_ORYSI</name>
<organism>
    <name type="scientific">Oryza sativa subsp. indica</name>
    <name type="common">Rice</name>
    <dbReference type="NCBI Taxonomy" id="39946"/>
    <lineage>
        <taxon>Eukaryota</taxon>
        <taxon>Viridiplantae</taxon>
        <taxon>Streptophyta</taxon>
        <taxon>Embryophyta</taxon>
        <taxon>Tracheophyta</taxon>
        <taxon>Spermatophyta</taxon>
        <taxon>Magnoliopsida</taxon>
        <taxon>Liliopsida</taxon>
        <taxon>Poales</taxon>
        <taxon>Poaceae</taxon>
        <taxon>BOP clade</taxon>
        <taxon>Oryzoideae</taxon>
        <taxon>Oryzeae</taxon>
        <taxon>Oryzinae</taxon>
        <taxon>Oryza</taxon>
        <taxon>Oryza sativa</taxon>
    </lineage>
</organism>
<accession>B8BLA3</accession>
<evidence type="ECO:0000250" key="1"/>
<evidence type="ECO:0000256" key="2">
    <source>
        <dbReference type="SAM" id="MobiDB-lite"/>
    </source>
</evidence>
<feature type="chain" id="PRO_0000429091" description="Transcription factor ILI2">
    <location>
        <begin position="1"/>
        <end position="101"/>
    </location>
</feature>
<feature type="domain" description="bHLH" evidence="1">
    <location>
        <begin position="8"/>
        <end position="63"/>
    </location>
</feature>
<feature type="region of interest" description="Disordered" evidence="2">
    <location>
        <begin position="1"/>
        <end position="22"/>
    </location>
</feature>
<gene>
    <name type="primary">ILI2</name>
    <name type="ORF">OsI_36643</name>
</gene>
<sequence length="101" mass="10996">MSSSRRSRTSSRLAAAPPPTDEQMAELISKLQAVLPTRGGEANAKQASSAEVLQEACRYIRRLHREADALSERLAELLLLQPSDLAINGADVPDLIRSLLM</sequence>
<reference key="1">
    <citation type="journal article" date="2005" name="PLoS Biol.">
        <title>The genomes of Oryza sativa: a history of duplications.</title>
        <authorList>
            <person name="Yu J."/>
            <person name="Wang J."/>
            <person name="Lin W."/>
            <person name="Li S."/>
            <person name="Li H."/>
            <person name="Zhou J."/>
            <person name="Ni P."/>
            <person name="Dong W."/>
            <person name="Hu S."/>
            <person name="Zeng C."/>
            <person name="Zhang J."/>
            <person name="Zhang Y."/>
            <person name="Li R."/>
            <person name="Xu Z."/>
            <person name="Li S."/>
            <person name="Li X."/>
            <person name="Zheng H."/>
            <person name="Cong L."/>
            <person name="Lin L."/>
            <person name="Yin J."/>
            <person name="Geng J."/>
            <person name="Li G."/>
            <person name="Shi J."/>
            <person name="Liu J."/>
            <person name="Lv H."/>
            <person name="Li J."/>
            <person name="Wang J."/>
            <person name="Deng Y."/>
            <person name="Ran L."/>
            <person name="Shi X."/>
            <person name="Wang X."/>
            <person name="Wu Q."/>
            <person name="Li C."/>
            <person name="Ren X."/>
            <person name="Wang J."/>
            <person name="Wang X."/>
            <person name="Li D."/>
            <person name="Liu D."/>
            <person name="Zhang X."/>
            <person name="Ji Z."/>
            <person name="Zhao W."/>
            <person name="Sun Y."/>
            <person name="Zhang Z."/>
            <person name="Bao J."/>
            <person name="Han Y."/>
            <person name="Dong L."/>
            <person name="Ji J."/>
            <person name="Chen P."/>
            <person name="Wu S."/>
            <person name="Liu J."/>
            <person name="Xiao Y."/>
            <person name="Bu D."/>
            <person name="Tan J."/>
            <person name="Yang L."/>
            <person name="Ye C."/>
            <person name="Zhang J."/>
            <person name="Xu J."/>
            <person name="Zhou Y."/>
            <person name="Yu Y."/>
            <person name="Zhang B."/>
            <person name="Zhuang S."/>
            <person name="Wei H."/>
            <person name="Liu B."/>
            <person name="Lei M."/>
            <person name="Yu H."/>
            <person name="Li Y."/>
            <person name="Xu H."/>
            <person name="Wei S."/>
            <person name="He X."/>
            <person name="Fang L."/>
            <person name="Zhang Z."/>
            <person name="Zhang Y."/>
            <person name="Huang X."/>
            <person name="Su Z."/>
            <person name="Tong W."/>
            <person name="Li J."/>
            <person name="Tong Z."/>
            <person name="Li S."/>
            <person name="Ye J."/>
            <person name="Wang L."/>
            <person name="Fang L."/>
            <person name="Lei T."/>
            <person name="Chen C.-S."/>
            <person name="Chen H.-C."/>
            <person name="Xu Z."/>
            <person name="Li H."/>
            <person name="Huang H."/>
            <person name="Zhang F."/>
            <person name="Xu H."/>
            <person name="Li N."/>
            <person name="Zhao C."/>
            <person name="Li S."/>
            <person name="Dong L."/>
            <person name="Huang Y."/>
            <person name="Li L."/>
            <person name="Xi Y."/>
            <person name="Qi Q."/>
            <person name="Li W."/>
            <person name="Zhang B."/>
            <person name="Hu W."/>
            <person name="Zhang Y."/>
            <person name="Tian X."/>
            <person name="Jiao Y."/>
            <person name="Liang X."/>
            <person name="Jin J."/>
            <person name="Gao L."/>
            <person name="Zheng W."/>
            <person name="Hao B."/>
            <person name="Liu S.-M."/>
            <person name="Wang W."/>
            <person name="Yuan L."/>
            <person name="Cao M."/>
            <person name="McDermott J."/>
            <person name="Samudrala R."/>
            <person name="Wang J."/>
            <person name="Wong G.K.-S."/>
            <person name="Yang H."/>
        </authorList>
    </citation>
    <scope>NUCLEOTIDE SEQUENCE [LARGE SCALE GENOMIC DNA]</scope>
    <source>
        <strain>cv. 93-11</strain>
    </source>
</reference>
<protein>
    <recommendedName>
        <fullName>Transcription factor ILI2</fullName>
        <shortName>OsILI2</shortName>
    </recommendedName>
    <alternativeName>
        <fullName>Protein INCREASED LEAF INCLINATION 2</fullName>
    </alternativeName>
</protein>
<keyword id="KW-0341">Growth regulation</keyword>
<keyword id="KW-1185">Reference proteome</keyword>
<keyword id="KW-0804">Transcription</keyword>
<keyword id="KW-0805">Transcription regulation</keyword>
<proteinExistence type="inferred from homology"/>